<gene>
    <name evidence="2" type="primary">pyrE</name>
    <name type="ordered locus">STY4061</name>
    <name type="ordered locus">t3785</name>
</gene>
<organism>
    <name type="scientific">Salmonella typhi</name>
    <dbReference type="NCBI Taxonomy" id="90370"/>
    <lineage>
        <taxon>Bacteria</taxon>
        <taxon>Pseudomonadati</taxon>
        <taxon>Pseudomonadota</taxon>
        <taxon>Gammaproteobacteria</taxon>
        <taxon>Enterobacterales</taxon>
        <taxon>Enterobacteriaceae</taxon>
        <taxon>Salmonella</taxon>
    </lineage>
</organism>
<comment type="function">
    <text evidence="2">Catalyzes the transfer of a ribosyl phosphate group from 5-phosphoribose 1-diphosphate to orotate, leading to the formation of orotidine monophosphate (OMP).</text>
</comment>
<comment type="catalytic activity">
    <reaction evidence="2">
        <text>orotidine 5'-phosphate + diphosphate = orotate + 5-phospho-alpha-D-ribose 1-diphosphate</text>
        <dbReference type="Rhea" id="RHEA:10380"/>
        <dbReference type="ChEBI" id="CHEBI:30839"/>
        <dbReference type="ChEBI" id="CHEBI:33019"/>
        <dbReference type="ChEBI" id="CHEBI:57538"/>
        <dbReference type="ChEBI" id="CHEBI:58017"/>
        <dbReference type="EC" id="2.4.2.10"/>
    </reaction>
</comment>
<comment type="cofactor">
    <cofactor evidence="2">
        <name>Mg(2+)</name>
        <dbReference type="ChEBI" id="CHEBI:18420"/>
    </cofactor>
</comment>
<comment type="pathway">
    <text evidence="2">Pyrimidine metabolism; UMP biosynthesis via de novo pathway; UMP from orotate: step 1/2.</text>
</comment>
<comment type="subunit">
    <text evidence="2">Homodimer.</text>
</comment>
<comment type="similarity">
    <text evidence="2">Belongs to the purine/pyrimidine phosphoribosyltransferase family. PyrE subfamily.</text>
</comment>
<accession>Q8Z2H5</accession>
<protein>
    <recommendedName>
        <fullName evidence="2">Orotate phosphoribosyltransferase</fullName>
        <shortName evidence="2">OPRT</shortName>
        <shortName evidence="2">OPRTase</shortName>
        <ecNumber evidence="2">2.4.2.10</ecNumber>
    </recommendedName>
</protein>
<evidence type="ECO:0000250" key="1"/>
<evidence type="ECO:0000255" key="2">
    <source>
        <dbReference type="HAMAP-Rule" id="MF_01208"/>
    </source>
</evidence>
<keyword id="KW-0328">Glycosyltransferase</keyword>
<keyword id="KW-0460">Magnesium</keyword>
<keyword id="KW-0665">Pyrimidine biosynthesis</keyword>
<keyword id="KW-0808">Transferase</keyword>
<sequence>MKPYQRQFIEFALNKQVLKFGEFTLKSGRKSPYFFNAGLFNTGRDLALLGRFYAEALVDSGIEFDLLFGPAYKGIPIATTTAVALAEHHDKDLPYCFNRKEAKDHGEGGSLVGSALQGRVMLVDDVITAGTAIRESMEIIQAHRATLAGVLISLDRQERGRGEISAIQEVERDYGCKVISIITLKDLIAYLEEKPDMAEHLAAVRAYREEFGV</sequence>
<reference key="1">
    <citation type="journal article" date="2001" name="Nature">
        <title>Complete genome sequence of a multiple drug resistant Salmonella enterica serovar Typhi CT18.</title>
        <authorList>
            <person name="Parkhill J."/>
            <person name="Dougan G."/>
            <person name="James K.D."/>
            <person name="Thomson N.R."/>
            <person name="Pickard D."/>
            <person name="Wain J."/>
            <person name="Churcher C.M."/>
            <person name="Mungall K.L."/>
            <person name="Bentley S.D."/>
            <person name="Holden M.T.G."/>
            <person name="Sebaihia M."/>
            <person name="Baker S."/>
            <person name="Basham D."/>
            <person name="Brooks K."/>
            <person name="Chillingworth T."/>
            <person name="Connerton P."/>
            <person name="Cronin A."/>
            <person name="Davis P."/>
            <person name="Davies R.M."/>
            <person name="Dowd L."/>
            <person name="White N."/>
            <person name="Farrar J."/>
            <person name="Feltwell T."/>
            <person name="Hamlin N."/>
            <person name="Haque A."/>
            <person name="Hien T.T."/>
            <person name="Holroyd S."/>
            <person name="Jagels K."/>
            <person name="Krogh A."/>
            <person name="Larsen T.S."/>
            <person name="Leather S."/>
            <person name="Moule S."/>
            <person name="O'Gaora P."/>
            <person name="Parry C."/>
            <person name="Quail M.A."/>
            <person name="Rutherford K.M."/>
            <person name="Simmonds M."/>
            <person name="Skelton J."/>
            <person name="Stevens K."/>
            <person name="Whitehead S."/>
            <person name="Barrell B.G."/>
        </authorList>
    </citation>
    <scope>NUCLEOTIDE SEQUENCE [LARGE SCALE GENOMIC DNA]</scope>
    <source>
        <strain>CT18</strain>
    </source>
</reference>
<reference key="2">
    <citation type="journal article" date="2003" name="J. Bacteriol.">
        <title>Comparative genomics of Salmonella enterica serovar Typhi strains Ty2 and CT18.</title>
        <authorList>
            <person name="Deng W."/>
            <person name="Liou S.-R."/>
            <person name="Plunkett G. III"/>
            <person name="Mayhew G.F."/>
            <person name="Rose D.J."/>
            <person name="Burland V."/>
            <person name="Kodoyianni V."/>
            <person name="Schwartz D.C."/>
            <person name="Blattner F.R."/>
        </authorList>
    </citation>
    <scope>NUCLEOTIDE SEQUENCE [LARGE SCALE GENOMIC DNA]</scope>
    <source>
        <strain>ATCC 700931 / Ty2</strain>
    </source>
</reference>
<dbReference type="EC" id="2.4.2.10" evidence="2"/>
<dbReference type="EMBL" id="AL513382">
    <property type="protein sequence ID" value="CAD03260.1"/>
    <property type="molecule type" value="Genomic_DNA"/>
</dbReference>
<dbReference type="EMBL" id="AE014613">
    <property type="protein sequence ID" value="AAO71267.1"/>
    <property type="molecule type" value="Genomic_DNA"/>
</dbReference>
<dbReference type="RefSeq" id="NP_458193.1">
    <property type="nucleotide sequence ID" value="NC_003198.1"/>
</dbReference>
<dbReference type="RefSeq" id="WP_000806169.1">
    <property type="nucleotide sequence ID" value="NZ_WSUR01000001.1"/>
</dbReference>
<dbReference type="SMR" id="Q8Z2H5"/>
<dbReference type="STRING" id="220341.gene:17587904"/>
<dbReference type="KEGG" id="stt:t3785"/>
<dbReference type="KEGG" id="sty:STY4061"/>
<dbReference type="PATRIC" id="fig|220341.7.peg.4146"/>
<dbReference type="eggNOG" id="COG0461">
    <property type="taxonomic scope" value="Bacteria"/>
</dbReference>
<dbReference type="HOGENOM" id="CLU_074878_0_1_6"/>
<dbReference type="OMA" id="SPFFMNA"/>
<dbReference type="OrthoDB" id="9779060at2"/>
<dbReference type="UniPathway" id="UPA00070">
    <property type="reaction ID" value="UER00119"/>
</dbReference>
<dbReference type="Proteomes" id="UP000000541">
    <property type="component" value="Chromosome"/>
</dbReference>
<dbReference type="Proteomes" id="UP000002670">
    <property type="component" value="Chromosome"/>
</dbReference>
<dbReference type="GO" id="GO:0005737">
    <property type="term" value="C:cytoplasm"/>
    <property type="evidence" value="ECO:0007669"/>
    <property type="project" value="TreeGrafter"/>
</dbReference>
<dbReference type="GO" id="GO:0000287">
    <property type="term" value="F:magnesium ion binding"/>
    <property type="evidence" value="ECO:0007669"/>
    <property type="project" value="UniProtKB-UniRule"/>
</dbReference>
<dbReference type="GO" id="GO:0004588">
    <property type="term" value="F:orotate phosphoribosyltransferase activity"/>
    <property type="evidence" value="ECO:0007669"/>
    <property type="project" value="UniProtKB-UniRule"/>
</dbReference>
<dbReference type="GO" id="GO:0006207">
    <property type="term" value="P:'de novo' pyrimidine nucleobase biosynthetic process"/>
    <property type="evidence" value="ECO:0007669"/>
    <property type="project" value="TreeGrafter"/>
</dbReference>
<dbReference type="GO" id="GO:0044205">
    <property type="term" value="P:'de novo' UMP biosynthetic process"/>
    <property type="evidence" value="ECO:0007669"/>
    <property type="project" value="UniProtKB-UniRule"/>
</dbReference>
<dbReference type="GO" id="GO:0046132">
    <property type="term" value="P:pyrimidine ribonucleoside biosynthetic process"/>
    <property type="evidence" value="ECO:0007669"/>
    <property type="project" value="TreeGrafter"/>
</dbReference>
<dbReference type="CDD" id="cd06223">
    <property type="entry name" value="PRTases_typeI"/>
    <property type="match status" value="1"/>
</dbReference>
<dbReference type="FunFam" id="3.40.50.2020:FF:000008">
    <property type="entry name" value="Orotate phosphoribosyltransferase"/>
    <property type="match status" value="1"/>
</dbReference>
<dbReference type="Gene3D" id="3.40.50.2020">
    <property type="match status" value="1"/>
</dbReference>
<dbReference type="HAMAP" id="MF_01208">
    <property type="entry name" value="PyrE"/>
    <property type="match status" value="1"/>
</dbReference>
<dbReference type="InterPro" id="IPR023031">
    <property type="entry name" value="OPRT"/>
</dbReference>
<dbReference type="InterPro" id="IPR004467">
    <property type="entry name" value="Or_phspho_trans_dom"/>
</dbReference>
<dbReference type="InterPro" id="IPR000836">
    <property type="entry name" value="PRibTrfase_dom"/>
</dbReference>
<dbReference type="InterPro" id="IPR029057">
    <property type="entry name" value="PRTase-like"/>
</dbReference>
<dbReference type="NCBIfam" id="TIGR00336">
    <property type="entry name" value="pyrE"/>
    <property type="match status" value="1"/>
</dbReference>
<dbReference type="PANTHER" id="PTHR46683">
    <property type="entry name" value="OROTATE PHOSPHORIBOSYLTRANSFERASE 1-RELATED"/>
    <property type="match status" value="1"/>
</dbReference>
<dbReference type="PANTHER" id="PTHR46683:SF1">
    <property type="entry name" value="OROTATE PHOSPHORIBOSYLTRANSFERASE 1-RELATED"/>
    <property type="match status" value="1"/>
</dbReference>
<dbReference type="Pfam" id="PF00156">
    <property type="entry name" value="Pribosyltran"/>
    <property type="match status" value="1"/>
</dbReference>
<dbReference type="SUPFAM" id="SSF53271">
    <property type="entry name" value="PRTase-like"/>
    <property type="match status" value="1"/>
</dbReference>
<dbReference type="PROSITE" id="PS00103">
    <property type="entry name" value="PUR_PYR_PR_TRANSFER"/>
    <property type="match status" value="1"/>
</dbReference>
<feature type="initiator methionine" description="Removed" evidence="1">
    <location>
        <position position="1"/>
    </location>
</feature>
<feature type="chain" id="PRO_0000110733" description="Orotate phosphoribosyltransferase">
    <location>
        <begin position="2"/>
        <end position="213"/>
    </location>
</feature>
<feature type="binding site" description="in other chain" evidence="2">
    <location>
        <position position="26"/>
    </location>
    <ligand>
        <name>5-phospho-alpha-D-ribose 1-diphosphate</name>
        <dbReference type="ChEBI" id="CHEBI:58017"/>
        <note>ligand shared between dimeric partners</note>
    </ligand>
</feature>
<feature type="binding site" evidence="2">
    <location>
        <begin position="34"/>
        <end position="35"/>
    </location>
    <ligand>
        <name>orotate</name>
        <dbReference type="ChEBI" id="CHEBI:30839"/>
    </ligand>
</feature>
<feature type="binding site" description="in other chain" evidence="2">
    <location>
        <begin position="72"/>
        <end position="73"/>
    </location>
    <ligand>
        <name>5-phospho-alpha-D-ribose 1-diphosphate</name>
        <dbReference type="ChEBI" id="CHEBI:58017"/>
        <note>ligand shared between dimeric partners</note>
    </ligand>
</feature>
<feature type="binding site" evidence="2">
    <location>
        <position position="99"/>
    </location>
    <ligand>
        <name>5-phospho-alpha-D-ribose 1-diphosphate</name>
        <dbReference type="ChEBI" id="CHEBI:58017"/>
        <note>ligand shared between dimeric partners</note>
    </ligand>
</feature>
<feature type="binding site" description="in other chain" evidence="2">
    <location>
        <position position="100"/>
    </location>
    <ligand>
        <name>5-phospho-alpha-D-ribose 1-diphosphate</name>
        <dbReference type="ChEBI" id="CHEBI:58017"/>
        <note>ligand shared between dimeric partners</note>
    </ligand>
</feature>
<feature type="binding site" evidence="2">
    <location>
        <position position="103"/>
    </location>
    <ligand>
        <name>5-phospho-alpha-D-ribose 1-diphosphate</name>
        <dbReference type="ChEBI" id="CHEBI:58017"/>
        <note>ligand shared between dimeric partners</note>
    </ligand>
</feature>
<feature type="binding site" evidence="2">
    <location>
        <position position="105"/>
    </location>
    <ligand>
        <name>5-phospho-alpha-D-ribose 1-diphosphate</name>
        <dbReference type="ChEBI" id="CHEBI:58017"/>
        <note>ligand shared between dimeric partners</note>
    </ligand>
</feature>
<feature type="binding site" description="in other chain" evidence="2">
    <location>
        <begin position="124"/>
        <end position="132"/>
    </location>
    <ligand>
        <name>5-phospho-alpha-D-ribose 1-diphosphate</name>
        <dbReference type="ChEBI" id="CHEBI:58017"/>
        <note>ligand shared between dimeric partners</note>
    </ligand>
</feature>
<feature type="binding site" evidence="2">
    <location>
        <position position="128"/>
    </location>
    <ligand>
        <name>orotate</name>
        <dbReference type="ChEBI" id="CHEBI:30839"/>
    </ligand>
</feature>
<feature type="binding site" evidence="2">
    <location>
        <position position="156"/>
    </location>
    <ligand>
        <name>orotate</name>
        <dbReference type="ChEBI" id="CHEBI:30839"/>
    </ligand>
</feature>
<proteinExistence type="inferred from homology"/>
<name>PYRE_SALTI</name>